<comment type="function">
    <text evidence="1 5">May play a role in DNA-protein cross-links (DPCs) clearance through a SUMO-dependent recruitment to sites of DPCs, ensuring the genomic stability by protecting germ cells and early embryos from various sources of damage (PubMed:30914427). Can resolve the topoisomerase II (TOP2A) DPCs (By similarity).</text>
</comment>
<comment type="subunit">
    <text evidence="1 5">Interacts (via SIM domains) with SUMO2; this interaction allows the GCNA recruitment to DPCs sites (PubMed:30914427). Interacts with TOP2A; this interaction allows the resolution of topoisomerase II (TOP2A) DNA-protein cross-links (By similarity).</text>
</comment>
<comment type="subcellular location">
    <subcellularLocation>
        <location evidence="4 12">Nucleus</location>
    </subcellularLocation>
    <subcellularLocation>
        <location evidence="5">Nucleus</location>
        <location evidence="5">PML body</location>
    </subcellularLocation>
    <subcellularLocation>
        <location evidence="1">Chromosome</location>
    </subcellularLocation>
    <text evidence="1 5">Co-localizes with SUMO2 at PML bodies in all interphase cells (PubMed:30914427). Localizes on condensed chromosomes in spermatocytes in G2 and M during meiotic prophase (By similarity).</text>
</comment>
<comment type="tissue specificity">
    <text evidence="3 4 6">Expressed in germ cells of the testis (at protein level) (PubMed:27718356). Detected in skeletal muscle, liver, kidney, pancreas, heart, lung and brain (PubMed:11714101). Expressed throughout spermatogenesis, from spermatogonia to elongated spermatids, in normal adult testis (at protein level) (PubMed:33963445).</text>
</comment>
<comment type="domain">
    <text evidence="5">SUMO interaction motif 1 (SIM) mediates the binding to polysumoylated substrates.</text>
</comment>
<comment type="disease" evidence="6 7">
    <disease id="DI-06380">
        <name>Spermatogenic failure, X-linked, 4</name>
        <acronym>SPGFX4</acronym>
        <description>A male infertility disorder characterized by non-obstructive azoospermia or oligoasthenoteratozoospermia. Some patients present spermatogenic maturation arrest with an almost complete absence of early and late primary spermatocytes.</description>
        <dbReference type="MIM" id="301077"/>
    </disease>
    <text>The disease is caused by variants affecting the gene represented in this entry.</text>
</comment>
<comment type="similarity">
    <text evidence="11">Belongs to the serine-aspartate repeat-containing protein (SDr) family.</text>
</comment>
<keyword id="KW-0158">Chromosome</keyword>
<keyword id="KW-0225">Disease variant</keyword>
<keyword id="KW-0539">Nucleus</keyword>
<keyword id="KW-1267">Proteomics identification</keyword>
<keyword id="KW-1185">Reference proteome</keyword>
<dbReference type="EMBL" id="AJ311392">
    <property type="protein sequence ID" value="CAC60255.1"/>
    <property type="molecule type" value="mRNA"/>
</dbReference>
<dbReference type="EMBL" id="AK097433">
    <property type="protein sequence ID" value="BAC05051.1"/>
    <property type="molecule type" value="mRNA"/>
</dbReference>
<dbReference type="EMBL" id="BC136259">
    <property type="protein sequence ID" value="AAI36260.1"/>
    <property type="molecule type" value="mRNA"/>
</dbReference>
<dbReference type="CCDS" id="CCDS35326.1"/>
<dbReference type="RefSeq" id="NP_443189.1">
    <property type="nucleotide sequence ID" value="NM_052957.5"/>
</dbReference>
<dbReference type="RefSeq" id="XP_006724779.1">
    <property type="nucleotide sequence ID" value="XM_006724716.3"/>
</dbReference>
<dbReference type="RefSeq" id="XP_011529366.1">
    <property type="nucleotide sequence ID" value="XM_011531064.1"/>
</dbReference>
<dbReference type="RefSeq" id="XP_016885454.1">
    <property type="nucleotide sequence ID" value="XM_017029965.1"/>
</dbReference>
<dbReference type="BioGRID" id="125058">
    <property type="interactions" value="4"/>
</dbReference>
<dbReference type="FunCoup" id="Q96QF7">
    <property type="interactions" value="34"/>
</dbReference>
<dbReference type="IntAct" id="Q96QF7">
    <property type="interactions" value="1"/>
</dbReference>
<dbReference type="STRING" id="9606.ENSP00000362799"/>
<dbReference type="GlyGen" id="Q96QF7">
    <property type="glycosylation" value="4 sites, 1 O-linked glycan (3 sites)"/>
</dbReference>
<dbReference type="iPTMnet" id="Q96QF7"/>
<dbReference type="PhosphoSitePlus" id="Q96QF7"/>
<dbReference type="BioMuta" id="GCNA"/>
<dbReference type="DMDM" id="74732669"/>
<dbReference type="MassIVE" id="Q96QF7"/>
<dbReference type="PaxDb" id="9606-ENSP00000362799"/>
<dbReference type="PeptideAtlas" id="Q96QF7"/>
<dbReference type="ProteomicsDB" id="77875"/>
<dbReference type="Antibodypedia" id="13638">
    <property type="antibodies" value="94 antibodies from 18 providers"/>
</dbReference>
<dbReference type="Ensembl" id="ENST00000373695.1">
    <property type="protein sequence ID" value="ENSP00000362799.1"/>
    <property type="gene ID" value="ENSG00000147174.12"/>
</dbReference>
<dbReference type="Ensembl" id="ENST00000373696.8">
    <property type="protein sequence ID" value="ENSP00000362800.3"/>
    <property type="gene ID" value="ENSG00000147174.12"/>
</dbReference>
<dbReference type="GeneID" id="93953"/>
<dbReference type="KEGG" id="hsa:93953"/>
<dbReference type="MANE-Select" id="ENST00000373696.8">
    <property type="protein sequence ID" value="ENSP00000362800.3"/>
    <property type="RefSeq nucleotide sequence ID" value="NM_052957.5"/>
    <property type="RefSeq protein sequence ID" value="NP_443189.1"/>
</dbReference>
<dbReference type="UCSC" id="uc004eae.3">
    <property type="organism name" value="human"/>
</dbReference>
<dbReference type="AGR" id="HGNC:15805"/>
<dbReference type="CTD" id="93953"/>
<dbReference type="DisGeNET" id="93953"/>
<dbReference type="GeneCards" id="GCNA"/>
<dbReference type="HGNC" id="HGNC:15805">
    <property type="gene designation" value="GCNA"/>
</dbReference>
<dbReference type="HPA" id="ENSG00000147174">
    <property type="expression patterns" value="Tissue enhanced (testis)"/>
</dbReference>
<dbReference type="MalaCards" id="GCNA"/>
<dbReference type="MIM" id="300369">
    <property type="type" value="gene"/>
</dbReference>
<dbReference type="MIM" id="301077">
    <property type="type" value="phenotype"/>
</dbReference>
<dbReference type="neXtProt" id="NX_Q96QF7"/>
<dbReference type="OpenTargets" id="ENSG00000147174"/>
<dbReference type="PharmGKB" id="PA24453"/>
<dbReference type="VEuPathDB" id="HostDB:ENSG00000147174"/>
<dbReference type="eggNOG" id="KOG3854">
    <property type="taxonomic scope" value="Eukaryota"/>
</dbReference>
<dbReference type="GeneTree" id="ENSGT00440000040163"/>
<dbReference type="HOGENOM" id="CLU_026277_0_0_1"/>
<dbReference type="InParanoid" id="Q96QF7"/>
<dbReference type="OMA" id="THEYCHL"/>
<dbReference type="OrthoDB" id="20772at2759"/>
<dbReference type="PAN-GO" id="Q96QF7">
    <property type="GO annotations" value="1 GO annotation based on evolutionary models"/>
</dbReference>
<dbReference type="PhylomeDB" id="Q96QF7"/>
<dbReference type="TreeFam" id="TF316140"/>
<dbReference type="PathwayCommons" id="Q96QF7"/>
<dbReference type="SignaLink" id="Q96QF7"/>
<dbReference type="BioGRID-ORCS" id="93953">
    <property type="hits" value="8 hits in 772 CRISPR screens"/>
</dbReference>
<dbReference type="ChiTaRS" id="ACRC">
    <property type="organism name" value="human"/>
</dbReference>
<dbReference type="GeneWiki" id="Acidic_repeat-containing_protein"/>
<dbReference type="GenomeRNAi" id="93953"/>
<dbReference type="Pharos" id="Q96QF7">
    <property type="development level" value="Tbio"/>
</dbReference>
<dbReference type="PRO" id="PR:Q96QF7"/>
<dbReference type="Proteomes" id="UP000005640">
    <property type="component" value="Chromosome X"/>
</dbReference>
<dbReference type="RNAct" id="Q96QF7">
    <property type="molecule type" value="protein"/>
</dbReference>
<dbReference type="Bgee" id="ENSG00000147174">
    <property type="expression patterns" value="Expressed in primordial germ cell in gonad and 119 other cell types or tissues"/>
</dbReference>
<dbReference type="GO" id="GO:0005694">
    <property type="term" value="C:chromosome"/>
    <property type="evidence" value="ECO:0007669"/>
    <property type="project" value="UniProtKB-SubCell"/>
</dbReference>
<dbReference type="GO" id="GO:0005654">
    <property type="term" value="C:nucleoplasm"/>
    <property type="evidence" value="ECO:0000314"/>
    <property type="project" value="HPA"/>
</dbReference>
<dbReference type="GO" id="GO:0005634">
    <property type="term" value="C:nucleus"/>
    <property type="evidence" value="ECO:0000314"/>
    <property type="project" value="UniProtKB"/>
</dbReference>
<dbReference type="GO" id="GO:0016605">
    <property type="term" value="C:PML body"/>
    <property type="evidence" value="ECO:0000314"/>
    <property type="project" value="UniProtKB"/>
</dbReference>
<dbReference type="GO" id="GO:0032184">
    <property type="term" value="F:SUMO polymer binding"/>
    <property type="evidence" value="ECO:0000314"/>
    <property type="project" value="UniProtKB"/>
</dbReference>
<dbReference type="GO" id="GO:0106300">
    <property type="term" value="P:protein-DNA covalent cross-linking repair"/>
    <property type="evidence" value="ECO:0000315"/>
    <property type="project" value="UniProtKB"/>
</dbReference>
<dbReference type="InterPro" id="IPR006640">
    <property type="entry name" value="SprT-like_domain"/>
</dbReference>
<dbReference type="PANTHER" id="PTHR23099:SF0">
    <property type="entry name" value="GERM CELL NUCLEAR ACIDIC PROTEIN"/>
    <property type="match status" value="1"/>
</dbReference>
<dbReference type="PANTHER" id="PTHR23099">
    <property type="entry name" value="TRANSCRIPTIONAL REGULATOR"/>
    <property type="match status" value="1"/>
</dbReference>
<dbReference type="Pfam" id="PF10263">
    <property type="entry name" value="SprT-like"/>
    <property type="match status" value="1"/>
</dbReference>
<dbReference type="SMART" id="SM00731">
    <property type="entry name" value="SprT"/>
    <property type="match status" value="1"/>
</dbReference>
<feature type="chain" id="PRO_0000317387" description="Germ cell nuclear acidic protein">
    <location>
        <begin position="1"/>
        <end position="691"/>
    </location>
</feature>
<feature type="domain" description="SprT-like">
    <location>
        <begin position="522"/>
        <end position="677"/>
    </location>
</feature>
<feature type="region of interest" description="Disordered" evidence="2">
    <location>
        <begin position="25"/>
        <end position="488"/>
    </location>
</feature>
<feature type="short sequence motif" description="SUMO interaction motif 1 (SIM)" evidence="5">
    <location>
        <begin position="22"/>
        <end position="25"/>
    </location>
</feature>
<feature type="short sequence motif" description="SUMO interaction motif 1 (SIM)" evidence="5">
    <location>
        <begin position="76"/>
        <end position="79"/>
    </location>
</feature>
<feature type="short sequence motif" description="SUMO interaction motif 1 (SIM)" evidence="5">
    <location>
        <begin position="97"/>
        <end position="100"/>
    </location>
</feature>
<feature type="short sequence motif" description="SUMO interaction motif 1 (SIM)" evidence="5">
    <location>
        <begin position="121"/>
        <end position="124"/>
    </location>
</feature>
<feature type="compositionally biased region" description="Low complexity" evidence="2">
    <location>
        <begin position="27"/>
        <end position="36"/>
    </location>
</feature>
<feature type="compositionally biased region" description="Polar residues" evidence="2">
    <location>
        <begin position="48"/>
        <end position="63"/>
    </location>
</feature>
<feature type="compositionally biased region" description="Basic and acidic residues" evidence="2">
    <location>
        <begin position="86"/>
        <end position="97"/>
    </location>
</feature>
<feature type="compositionally biased region" description="Acidic residues" evidence="2">
    <location>
        <begin position="124"/>
        <end position="333"/>
    </location>
</feature>
<feature type="compositionally biased region" description="Basic residues" evidence="2">
    <location>
        <begin position="467"/>
        <end position="488"/>
    </location>
</feature>
<feature type="sequence variant" id="VAR_085476" description="In SPGFX4; uncertain significance; dbSNP:rs746349614." evidence="6">
    <original>D</original>
    <variation>N</variation>
    <location>
        <position position="17"/>
    </location>
</feature>
<feature type="sequence variant" id="VAR_085477" description="In SPGFX4; uncertain significance; dbSNP:rs200457016." evidence="6">
    <original>V</original>
    <variation>M</variation>
    <location>
        <position position="76"/>
    </location>
</feature>
<feature type="sequence variant" id="VAR_085478" description="In SPGFX4; uncertain significance." evidence="6">
    <original>S</original>
    <variation>R</variation>
    <location>
        <position position="102"/>
    </location>
</feature>
<feature type="sequence variant" id="VAR_085479" description="In SPGFX4; uncertain significance; dbSNP:rs766534592." evidence="6">
    <original>N</original>
    <variation>K</variation>
    <location>
        <position position="182"/>
    </location>
</feature>
<feature type="sequence variant" id="VAR_085480" description="In SPGFX4; uncertain significance; dbSNP:rs143368028." evidence="6">
    <original>P</original>
    <variation>S</variation>
    <location>
        <position position="189"/>
    </location>
</feature>
<feature type="sequence variant" id="VAR_085481" description="In SPGFX4; uncertain significance; dbSNP:rs141229655." evidence="6">
    <original>K</original>
    <variation>N</variation>
    <location>
        <position position="218"/>
    </location>
</feature>
<feature type="sequence variant" id="VAR_085482" description="In SPGFX4; uncertain significance; requires 2 nucleotide substitutions." evidence="7">
    <original>K</original>
    <variation>S</variation>
    <location>
        <position position="218"/>
    </location>
</feature>
<feature type="sequence variant" id="VAR_085483" description="In SPGFX4; uncertain significance; dbSNP:rs199853865." evidence="6">
    <original>S</original>
    <variation>P</variation>
    <location>
        <position position="285"/>
    </location>
</feature>
<feature type="sequence variant" id="VAR_085484" description="In SPGFX4; uncertain significance; dbSNP:rs761086272." evidence="6">
    <original>S</original>
    <variation>P</variation>
    <location>
        <position position="295"/>
    </location>
</feature>
<feature type="sequence variant" id="VAR_087077" description="In SPGFX4." evidence="7">
    <location>
        <begin position="394"/>
        <end position="691"/>
    </location>
</feature>
<feature type="sequence variant" id="VAR_085486" description="In SPGFX4; uncertain significance; dbSNP:rs144602884." evidence="6">
    <original>R</original>
    <variation>S</variation>
    <location>
        <position position="441"/>
    </location>
</feature>
<feature type="sequence variant" id="VAR_085487" description="In SPGFX4; uncertain significance; dbSNP:rs776093985." evidence="6">
    <original>T</original>
    <variation>I</variation>
    <location>
        <position position="465"/>
    </location>
</feature>
<feature type="sequence variant" id="VAR_050634" description="In dbSNP:rs10217999.">
    <original>R</original>
    <variation>H</variation>
    <location>
        <position position="471"/>
    </location>
</feature>
<feature type="sequence variant" id="VAR_085488" description="In SPGFX4; uncertain significance." evidence="6">
    <original>G</original>
    <variation>S</variation>
    <location>
        <position position="545"/>
    </location>
</feature>
<feature type="sequence variant" id="VAR_085489" description="In SPGFX4; uncertain significance; dbSNP:rs756204489." evidence="6">
    <original>S</original>
    <variation>W</variation>
    <location>
        <position position="659"/>
    </location>
</feature>
<feature type="sequence variant" id="VAR_038520" description="In dbSNP:rs2280962.">
    <original>T</original>
    <variation>I</variation>
    <location>
        <position position="662"/>
    </location>
</feature>
<feature type="sequence variant" id="VAR_085490" description="In SPGFX4; uncertain significance; dbSNP:rs138927483." evidence="6">
    <original>R</original>
    <variation>C</variation>
    <location>
        <position position="664"/>
    </location>
</feature>
<feature type="sequence variant" id="VAR_085491" description="In SPGFX4; uncertain significance; dbSNP:rs376298923." evidence="6">
    <original>R</original>
    <variation>C</variation>
    <location>
        <position position="686"/>
    </location>
</feature>
<feature type="mutagenesis site" description="Impairs SUMO2 interaction. Loss of SUMO2 interaction; when associated with 76-A--A-79, 97-A--A-100 and 121-A--A-124. Loss of SUMO2-dependent recruitment to DNA-protein cross-links (DPCs); when associated with 76-A--A-79; 97-A--A-100 and 121-A--A-124." evidence="5">
    <original>ILNV</original>
    <variation>AAAA</variation>
    <location>
        <begin position="22"/>
        <end position="25"/>
    </location>
</feature>
<feature type="mutagenesis site" description="Impairs SUMO2 interaction. Loss of SUMO2 interaction; when associated with 22-A--A-25, 97-A--A-100 and 121-A--A-124. Loss of SUMO2-dependent recruitment to DNA-protein cross-links (DPCs); when associated with 22-A--A-25; 97-A--A-100 and 121-A--A-124." evidence="5">
    <original>VVVI</original>
    <variation>AAAA</variation>
    <location>
        <begin position="76"/>
        <end position="79"/>
    </location>
</feature>
<feature type="mutagenesis site" description="Impairs SUMO2 interaction. Loss of SUMO2 interaction; when associated with 22-A--A-25, 76-A--A-79 and 121-A--A-124. Loss of SUMO2-dependent recruitment to DNA-protein cross-links (DPCs); when associated with 22-A--A-25; 76-A--A-79 and 121-A--A-124." evidence="5">
    <original>LLEI</original>
    <variation>AAAA</variation>
    <location>
        <begin position="97"/>
        <end position="100"/>
    </location>
</feature>
<feature type="mutagenesis site" description="Impairs SUMO2 interaction. Loss of SUMO2 interaction; when associated with 22-A--A-25, 76-A--A-79 and 97-A--A-100. Loss of SUMO2-dependent recruitment to DNA-protein cross-links (DPCs); when associated with 22-A--A-25; 76-A--A-79 and 97-A--A-100." evidence="5">
    <original>IVIS</original>
    <variation>AAAA</variation>
    <location>
        <begin position="121"/>
        <end position="124"/>
    </location>
</feature>
<gene>
    <name evidence="13" type="primary">GCNA</name>
    <name evidence="8" type="synonym">ACRC</name>
</gene>
<name>GCNA_HUMAN</name>
<proteinExistence type="evidence at protein level"/>
<organism>
    <name type="scientific">Homo sapiens</name>
    <name type="common">Human</name>
    <dbReference type="NCBI Taxonomy" id="9606"/>
    <lineage>
        <taxon>Eukaryota</taxon>
        <taxon>Metazoa</taxon>
        <taxon>Chordata</taxon>
        <taxon>Craniata</taxon>
        <taxon>Vertebrata</taxon>
        <taxon>Euteleostomi</taxon>
        <taxon>Mammalia</taxon>
        <taxon>Eutheria</taxon>
        <taxon>Euarchontoglires</taxon>
        <taxon>Primates</taxon>
        <taxon>Haplorrhini</taxon>
        <taxon>Catarrhini</taxon>
        <taxon>Hominidae</taxon>
        <taxon>Homo</taxon>
    </lineage>
</organism>
<sequence>MDGCKKELPRLQEPEEDEDCYILNVQSSSDDTSGSSVARRAPKRQASCILNVQSRSGDTSGSSVARRAPKRQASSVVVIDSDSDEECHTHEEKKAKLLEINSDDESPECCHVKPAIQEPPIVISDDDNDDDNGNDLEVPDDNSDDSEAPDDNSDDSEAPDDNSDDSEAPDDNSDDSEAPDDNSDDSDVPDDNSDDSSDDNSDDSSDDNSDDSDVPDDKSDDSDVPDDSSDDSDVPDDSSDDSEAPDDSSDDSEAPDDSSDDSEAPDDSSDDSEAPDDSSDDSEASDDSSDDSEASDDSSDDSEAPDDKSDDSDVPEDKSDDSDVPDDNSDDLEVPVPAEDLCNEGQIASDEEELVEAAAAVSQHDSSDDAGEQDLGENLSKPPSDPEANPEVSERKLPTEEEPAPVVEQSGKRKSKTKTIVEPPRKRQTKTKNIVEPPRKRQTKTKNIVEPLRKRKAKTKNVSVTPGHKKRGPSKKKPGAAKVEKRKTRTPKCKVPGCFLQDLEKSKKYSGKNLKRNKDELVQRIYDLFNRSVCDKKLPEKLRIGWNNKMVKTAGLCSTGEMWYPKWRRFAKIQIGLKVCDSADRIRDTLIHEMCHAASWLIDGIHDSHGDAWKYYARKSNRIHPELPRVTRCHNYKINYKVHYECTGCKTRIGCYTKSLDTSRFICAKCKGSLVMVPLTQKDGTRIVPHV</sequence>
<accession>Q96QF7</accession>
<accession>B9EG62</accession>
<protein>
    <recommendedName>
        <fullName evidence="11">Germ cell nuclear acidic protein</fullName>
    </recommendedName>
    <alternativeName>
        <fullName evidence="8">Acidic repeat-containing protein</fullName>
    </alternativeName>
    <alternativeName>
        <fullName evidence="10">Germ cell nuclear acidic peptidase</fullName>
    </alternativeName>
    <alternativeName>
        <fullName evidence="9">Germ cell nuclear antigen</fullName>
    </alternativeName>
</protein>
<evidence type="ECO:0000250" key="1">
    <source>
        <dbReference type="UniProtKB" id="A0A1D9BZF0"/>
    </source>
</evidence>
<evidence type="ECO:0000256" key="2">
    <source>
        <dbReference type="SAM" id="MobiDB-lite"/>
    </source>
</evidence>
<evidence type="ECO:0000269" key="3">
    <source>
    </source>
</evidence>
<evidence type="ECO:0000269" key="4">
    <source>
    </source>
</evidence>
<evidence type="ECO:0000269" key="5">
    <source>
    </source>
</evidence>
<evidence type="ECO:0000269" key="6">
    <source>
    </source>
</evidence>
<evidence type="ECO:0000269" key="7">
    <source>
    </source>
</evidence>
<evidence type="ECO:0000303" key="8">
    <source>
    </source>
</evidence>
<evidence type="ECO:0000303" key="9">
    <source>
    </source>
</evidence>
<evidence type="ECO:0000303" key="10">
    <source>
    </source>
</evidence>
<evidence type="ECO:0000305" key="11"/>
<evidence type="ECO:0000305" key="12">
    <source>
    </source>
</evidence>
<evidence type="ECO:0000312" key="13">
    <source>
        <dbReference type="HGNC" id="HGNC:15805"/>
    </source>
</evidence>
<reference key="1">
    <citation type="journal article" date="2001" name="Neurogenetics">
        <title>ACRC codes for a novel nuclear protein with unusual acidic repeat tract and maps to DYT3 (dystonia parkinsonism) critical interval in xq13.1.</title>
        <authorList>
            <person name="Nolte D."/>
            <person name="Ramser J."/>
            <person name="Niemann S."/>
            <person name="Lehrach H."/>
            <person name="Sudbrak R."/>
            <person name="Mueller U."/>
        </authorList>
    </citation>
    <scope>NUCLEOTIDE SEQUENCE [MRNA]</scope>
    <scope>SUBCELLULAR LOCATION</scope>
    <scope>TISSUE SPECIFICITY</scope>
    <source>
        <tissue>Fetal brain</tissue>
    </source>
</reference>
<reference key="2">
    <citation type="journal article" date="2004" name="Nat. Genet.">
        <title>Complete sequencing and characterization of 21,243 full-length human cDNAs.</title>
        <authorList>
            <person name="Ota T."/>
            <person name="Suzuki Y."/>
            <person name="Nishikawa T."/>
            <person name="Otsuki T."/>
            <person name="Sugiyama T."/>
            <person name="Irie R."/>
            <person name="Wakamatsu A."/>
            <person name="Hayashi K."/>
            <person name="Sato H."/>
            <person name="Nagai K."/>
            <person name="Kimura K."/>
            <person name="Makita H."/>
            <person name="Sekine M."/>
            <person name="Obayashi M."/>
            <person name="Nishi T."/>
            <person name="Shibahara T."/>
            <person name="Tanaka T."/>
            <person name="Ishii S."/>
            <person name="Yamamoto J."/>
            <person name="Saito K."/>
            <person name="Kawai Y."/>
            <person name="Isono Y."/>
            <person name="Nakamura Y."/>
            <person name="Nagahari K."/>
            <person name="Murakami K."/>
            <person name="Yasuda T."/>
            <person name="Iwayanagi T."/>
            <person name="Wagatsuma M."/>
            <person name="Shiratori A."/>
            <person name="Sudo H."/>
            <person name="Hosoiri T."/>
            <person name="Kaku Y."/>
            <person name="Kodaira H."/>
            <person name="Kondo H."/>
            <person name="Sugawara M."/>
            <person name="Takahashi M."/>
            <person name="Kanda K."/>
            <person name="Yokoi T."/>
            <person name="Furuya T."/>
            <person name="Kikkawa E."/>
            <person name="Omura Y."/>
            <person name="Abe K."/>
            <person name="Kamihara K."/>
            <person name="Katsuta N."/>
            <person name="Sato K."/>
            <person name="Tanikawa M."/>
            <person name="Yamazaki M."/>
            <person name="Ninomiya K."/>
            <person name="Ishibashi T."/>
            <person name="Yamashita H."/>
            <person name="Murakawa K."/>
            <person name="Fujimori K."/>
            <person name="Tanai H."/>
            <person name="Kimata M."/>
            <person name="Watanabe M."/>
            <person name="Hiraoka S."/>
            <person name="Chiba Y."/>
            <person name="Ishida S."/>
            <person name="Ono Y."/>
            <person name="Takiguchi S."/>
            <person name="Watanabe S."/>
            <person name="Yosida M."/>
            <person name="Hotuta T."/>
            <person name="Kusano J."/>
            <person name="Kanehori K."/>
            <person name="Takahashi-Fujii A."/>
            <person name="Hara H."/>
            <person name="Tanase T.-O."/>
            <person name="Nomura Y."/>
            <person name="Togiya S."/>
            <person name="Komai F."/>
            <person name="Hara R."/>
            <person name="Takeuchi K."/>
            <person name="Arita M."/>
            <person name="Imose N."/>
            <person name="Musashino K."/>
            <person name="Yuuki H."/>
            <person name="Oshima A."/>
            <person name="Sasaki N."/>
            <person name="Aotsuka S."/>
            <person name="Yoshikawa Y."/>
            <person name="Matsunawa H."/>
            <person name="Ichihara T."/>
            <person name="Shiohata N."/>
            <person name="Sano S."/>
            <person name="Moriya S."/>
            <person name="Momiyama H."/>
            <person name="Satoh N."/>
            <person name="Takami S."/>
            <person name="Terashima Y."/>
            <person name="Suzuki O."/>
            <person name="Nakagawa S."/>
            <person name="Senoh A."/>
            <person name="Mizoguchi H."/>
            <person name="Goto Y."/>
            <person name="Shimizu F."/>
            <person name="Wakebe H."/>
            <person name="Hishigaki H."/>
            <person name="Watanabe T."/>
            <person name="Sugiyama A."/>
            <person name="Takemoto M."/>
            <person name="Kawakami B."/>
            <person name="Yamazaki M."/>
            <person name="Watanabe K."/>
            <person name="Kumagai A."/>
            <person name="Itakura S."/>
            <person name="Fukuzumi Y."/>
            <person name="Fujimori Y."/>
            <person name="Komiyama M."/>
            <person name="Tashiro H."/>
            <person name="Tanigami A."/>
            <person name="Fujiwara T."/>
            <person name="Ono T."/>
            <person name="Yamada K."/>
            <person name="Fujii Y."/>
            <person name="Ozaki K."/>
            <person name="Hirao M."/>
            <person name="Ohmori Y."/>
            <person name="Kawabata A."/>
            <person name="Hikiji T."/>
            <person name="Kobatake N."/>
            <person name="Inagaki H."/>
            <person name="Ikema Y."/>
            <person name="Okamoto S."/>
            <person name="Okitani R."/>
            <person name="Kawakami T."/>
            <person name="Noguchi S."/>
            <person name="Itoh T."/>
            <person name="Shigeta K."/>
            <person name="Senba T."/>
            <person name="Matsumura K."/>
            <person name="Nakajima Y."/>
            <person name="Mizuno T."/>
            <person name="Morinaga M."/>
            <person name="Sasaki M."/>
            <person name="Togashi T."/>
            <person name="Oyama M."/>
            <person name="Hata H."/>
            <person name="Watanabe M."/>
            <person name="Komatsu T."/>
            <person name="Mizushima-Sugano J."/>
            <person name="Satoh T."/>
            <person name="Shirai Y."/>
            <person name="Takahashi Y."/>
            <person name="Nakagawa K."/>
            <person name="Okumura K."/>
            <person name="Nagase T."/>
            <person name="Nomura N."/>
            <person name="Kikuchi H."/>
            <person name="Masuho Y."/>
            <person name="Yamashita R."/>
            <person name="Nakai K."/>
            <person name="Yada T."/>
            <person name="Nakamura Y."/>
            <person name="Ohara O."/>
            <person name="Isogai T."/>
            <person name="Sugano S."/>
        </authorList>
    </citation>
    <scope>NUCLEOTIDE SEQUENCE [LARGE SCALE MRNA]</scope>
    <source>
        <tissue>Testis</tissue>
    </source>
</reference>
<reference key="3">
    <citation type="journal article" date="2004" name="Genome Res.">
        <title>The status, quality, and expansion of the NIH full-length cDNA project: the Mammalian Gene Collection (MGC).</title>
        <authorList>
            <consortium name="The MGC Project Team"/>
        </authorList>
    </citation>
    <scope>NUCLEOTIDE SEQUENCE [LARGE SCALE MRNA]</scope>
    <source>
        <tissue>Heart</tissue>
        <tissue>Lung</tissue>
    </source>
</reference>
<reference key="4">
    <citation type="journal article" date="2016" name="Elife">
        <title>A widely employed germ cell marker is an ancient disordered protein with reproductive functions in diverse eukaryotes.</title>
        <authorList>
            <person name="Carmell M.A."/>
            <person name="Dokshin G.A."/>
            <person name="Skaletsky H."/>
            <person name="Hu Y.C."/>
            <person name="van Wolfswinkel J.C."/>
            <person name="Igarashi K.J."/>
            <person name="Bellott D.W."/>
            <person name="Nefedov M."/>
            <person name="Reddien P.W."/>
            <person name="Enders G.C."/>
            <person name="Uversky V.N."/>
            <person name="Mello C.C."/>
            <person name="Page D.C."/>
        </authorList>
    </citation>
    <scope>SUBCELLULAR LOCATION</scope>
    <scope>TISSUE SPECIFICITY</scope>
</reference>
<reference key="5">
    <citation type="journal article" date="2019" name="EMBO J.">
        <title>SUMOylation promotes protective responses to DNA-protein cross-links.</title>
        <authorList>
            <person name="Borgermann N."/>
            <person name="Ackermann L."/>
            <person name="Schwertman P."/>
            <person name="Hendriks I.A."/>
            <person name="Thijssen K."/>
            <person name="Liu J.C."/>
            <person name="Lans H."/>
            <person name="Nielsen M.L."/>
            <person name="Mailand N."/>
        </authorList>
    </citation>
    <scope>INTERACTION WITH SUMO2</scope>
    <scope>MUTAGENESIS OF 22-ILE--VAL-25; 76-VAL--ILE-79; 97-LEU--ILE-100 AND 121-ILE--SER-124</scope>
    <scope>IDENTIFICATION OF REPEAT SUMO-INTERACTING MOTIF</scope>
    <scope>SUBCELLULAR LOCATION</scope>
    <scope>FUNCTION</scope>
</reference>
<reference key="6">
    <citation type="journal article" date="2021" name="Hum. Genet.">
        <title>Variants in GCNA, X-linked germ-cell genome integrity gene, identified in men with primary spermatogenic failure.</title>
        <authorList>
            <consortium name="GEMINI Consortium"/>
            <person name="Hardy J.J."/>
            <person name="Wyrwoll M.J."/>
            <person name="Mcfadden W."/>
            <person name="Malcher A."/>
            <person name="Rotte N."/>
            <person name="Pollock N.C."/>
            <person name="Munyoki S."/>
            <person name="Veroli M.V."/>
            <person name="Houston B.J."/>
            <person name="Xavier M.J."/>
            <person name="Kasak L."/>
            <person name="Punab M."/>
            <person name="Laan M."/>
            <person name="Kliesch S."/>
            <person name="Schlegel P."/>
            <person name="Jaffe T."/>
            <person name="Hwang K."/>
            <person name="Vukina J."/>
            <person name="Brieno-Enriquez M.A."/>
            <person name="Orwig K."/>
            <person name="Yanowitz J."/>
            <person name="Buszczak M."/>
            <person name="Veltman J.A."/>
            <person name="Oud M."/>
            <person name="Nagirnaja L."/>
            <person name="Olszewska M."/>
            <person name="O'Bryan M.K."/>
            <person name="Conrad D.F."/>
            <person name="Kurpisz M."/>
            <person name="Tuettelmann F."/>
            <person name="Yatsenko A.N."/>
        </authorList>
    </citation>
    <scope>SUBCELLULAR LOCATION</scope>
    <scope>TISSUE SPECIFICITY</scope>
    <scope>VARIANTS SPGFX4 ASN-17; MET-76; ARG-102; LYS-182; SER-189; ASN-218; PRO-285; PRO-295; SER-441; ILE-465; SER-545; TRP-659; CYS-664 AND CYS-686</scope>
    <scope>INVOLVEMENT IN SPGFX4</scope>
</reference>
<reference key="7">
    <citation type="journal article" date="2021" name="Eur. J. Hum. Genet.">
        <title>Pathogenic variations in Germ Cell Nuclear Acidic Peptidase (GCNA) are associated with human male infertility.</title>
        <authorList>
            <person name="Arafat M."/>
            <person name="Kleiman S.E."/>
            <person name="AbuMadighem A."/>
            <person name="Zeadna A."/>
            <person name="Levitas E."/>
            <person name="Vardi I.H."/>
            <person name="Barda S."/>
            <person name="Lehavi O."/>
            <person name="Hauser R."/>
            <person name="Lunenfeld E."/>
            <person name="Huleihel M."/>
            <person name="Gershoni M."/>
            <person name="Parvari R."/>
        </authorList>
    </citation>
    <scope>VARIANTS SPGFX4 SER-218 AND 394-GLU--VAL-691 DEL</scope>
    <scope>INVOLVEMENT IN SPGFX4</scope>
</reference>